<evidence type="ECO:0000250" key="1">
    <source>
        <dbReference type="UniProtKB" id="B1AL88"/>
    </source>
</evidence>
<evidence type="ECO:0000255" key="2"/>
<evidence type="ECO:0000256" key="3">
    <source>
        <dbReference type="SAM" id="MobiDB-lite"/>
    </source>
</evidence>
<evidence type="ECO:0000269" key="4">
    <source>
    </source>
</evidence>
<evidence type="ECO:0000303" key="5">
    <source>
    </source>
</evidence>
<evidence type="ECO:0000305" key="6"/>
<evidence type="ECO:0000312" key="7">
    <source>
        <dbReference type="MGI" id="MGI:2142765"/>
    </source>
</evidence>
<evidence type="ECO:0007744" key="8">
    <source>
        <dbReference type="PDB" id="7CU3"/>
    </source>
</evidence>
<evidence type="ECO:0007829" key="9">
    <source>
        <dbReference type="PDB" id="7CU3"/>
    </source>
</evidence>
<evidence type="ECO:0007829" key="10">
    <source>
        <dbReference type="PDB" id="7W7G"/>
    </source>
</evidence>
<dbReference type="EMBL" id="AK032202">
    <property type="protein sequence ID" value="BAC27755.1"/>
    <property type="molecule type" value="mRNA"/>
</dbReference>
<dbReference type="EMBL" id="BC117535">
    <property type="protein sequence ID" value="AAI17536.1"/>
    <property type="molecule type" value="mRNA"/>
</dbReference>
<dbReference type="CCDS" id="CCDS40216.1">
    <molecule id="Q8CCS2-1"/>
</dbReference>
<dbReference type="CCDS" id="CCDS85497.1">
    <molecule id="Q8CCS2-2"/>
</dbReference>
<dbReference type="RefSeq" id="NP_001334056.1">
    <molecule id="Q8CCS2-2"/>
    <property type="nucleotide sequence ID" value="NM_001347127.1"/>
</dbReference>
<dbReference type="RefSeq" id="NP_775622.1">
    <molecule id="Q8CCS2-1"/>
    <property type="nucleotide sequence ID" value="NM_173446.2"/>
</dbReference>
<dbReference type="PDB" id="7CU3">
    <property type="method" value="EM"/>
    <property type="resolution" value="2.65 A"/>
    <property type="chains" value="B=1-467"/>
</dbReference>
<dbReference type="PDB" id="7W7G">
    <property type="method" value="EM"/>
    <property type="resolution" value="3.20 A"/>
    <property type="chains" value="D=1-467"/>
</dbReference>
<dbReference type="PDBsum" id="7CU3"/>
<dbReference type="PDBsum" id="7W7G"/>
<dbReference type="EMDB" id="EMD-30470"/>
<dbReference type="EMDB" id="EMD-32344"/>
<dbReference type="SMR" id="Q8CCS2"/>
<dbReference type="BioGRID" id="234748">
    <property type="interactions" value="1"/>
</dbReference>
<dbReference type="FunCoup" id="Q8CCS2">
    <property type="interactions" value="869"/>
</dbReference>
<dbReference type="IntAct" id="Q8CCS2">
    <property type="interactions" value="1"/>
</dbReference>
<dbReference type="STRING" id="10090.ENSMUSP00000106596"/>
<dbReference type="GlyCosmos" id="Q8CCS2">
    <property type="glycosylation" value="4 sites, No reported glycans"/>
</dbReference>
<dbReference type="GlyGen" id="Q8CCS2">
    <property type="glycosylation" value="4 sites"/>
</dbReference>
<dbReference type="PhosphoSitePlus" id="Q8CCS2"/>
<dbReference type="PaxDb" id="10090-ENSMUSP00000106596"/>
<dbReference type="ProteomicsDB" id="275567">
    <molecule id="Q8CCS2-1"/>
</dbReference>
<dbReference type="ProteomicsDB" id="275568">
    <molecule id="Q8CCS2-2"/>
</dbReference>
<dbReference type="Antibodypedia" id="48568">
    <property type="antibodies" value="98 antibodies from 14 providers"/>
</dbReference>
<dbReference type="DNASU" id="270028"/>
<dbReference type="Ensembl" id="ENSMUST00000110969.5">
    <molecule id="Q8CCS2-1"/>
    <property type="protein sequence ID" value="ENSMUSP00000106596.4"/>
    <property type="gene ID" value="ENSMUSG00000079157.5"/>
</dbReference>
<dbReference type="Ensembl" id="ENSMUST00000208933.2">
    <molecule id="Q8CCS2-2"/>
    <property type="protein sequence ID" value="ENSMUSP00000146609.2"/>
    <property type="gene ID" value="ENSMUSG00000079157.5"/>
</dbReference>
<dbReference type="GeneID" id="270028"/>
<dbReference type="KEGG" id="mmu:270028"/>
<dbReference type="UCSC" id="uc009kuj.1">
    <molecule id="Q8CCS2-1"/>
    <property type="organism name" value="mouse"/>
</dbReference>
<dbReference type="UCSC" id="uc009kuk.1">
    <molecule id="Q8CCS2-2"/>
    <property type="organism name" value="mouse"/>
</dbReference>
<dbReference type="AGR" id="MGI:2142765"/>
<dbReference type="CTD" id="728215"/>
<dbReference type="MGI" id="MGI:2142765">
    <property type="gene designation" value="Nalf1"/>
</dbReference>
<dbReference type="VEuPathDB" id="HostDB:ENSMUSG00000079157"/>
<dbReference type="eggNOG" id="ENOG502QQKW">
    <property type="taxonomic scope" value="Eukaryota"/>
</dbReference>
<dbReference type="GeneTree" id="ENSGT00940000155696"/>
<dbReference type="HOGENOM" id="CLU_058453_0_0_1"/>
<dbReference type="InParanoid" id="Q8CCS2"/>
<dbReference type="OMA" id="CMDECKM"/>
<dbReference type="OrthoDB" id="10047996at2759"/>
<dbReference type="PhylomeDB" id="Q8CCS2"/>
<dbReference type="TreeFam" id="TF331752"/>
<dbReference type="BioGRID-ORCS" id="270028">
    <property type="hits" value="2 hits in 77 CRISPR screens"/>
</dbReference>
<dbReference type="ChiTaRS" id="Fam155a">
    <property type="organism name" value="mouse"/>
</dbReference>
<dbReference type="PRO" id="PR:Q8CCS2"/>
<dbReference type="Proteomes" id="UP000000589">
    <property type="component" value="Chromosome 8"/>
</dbReference>
<dbReference type="RNAct" id="Q8CCS2">
    <property type="molecule type" value="protein"/>
</dbReference>
<dbReference type="Bgee" id="ENSMUSG00000079157">
    <property type="expression patterns" value="Expressed in subiculum and 114 other cell types or tissues"/>
</dbReference>
<dbReference type="ExpressionAtlas" id="Q8CCS2">
    <property type="expression patterns" value="baseline and differential"/>
</dbReference>
<dbReference type="GO" id="GO:0005886">
    <property type="term" value="C:plasma membrane"/>
    <property type="evidence" value="ECO:0000250"/>
    <property type="project" value="UniProtKB"/>
</dbReference>
<dbReference type="InterPro" id="IPR055288">
    <property type="entry name" value="NALCN_aux_factor_1/2"/>
</dbReference>
<dbReference type="PANTHER" id="PTHR15819:SF9">
    <property type="entry name" value="NALCN CHANNEL AUXILIARY FACTOR 1"/>
    <property type="match status" value="1"/>
</dbReference>
<dbReference type="PANTHER" id="PTHR15819">
    <property type="entry name" value="TRANSMEMBRANE PROTEIN FAM155"/>
    <property type="match status" value="1"/>
</dbReference>
<dbReference type="SUPFAM" id="SSF81995">
    <property type="entry name" value="beta-sandwich domain of Sec23/24"/>
    <property type="match status" value="1"/>
</dbReference>
<name>NALF1_MOUSE</name>
<comment type="function">
    <text evidence="1">Auxillary component of the NALCN sodium channel complex, a channel that regulates the resting membrane potential and controls neuronal excitability.</text>
</comment>
<comment type="subunit">
    <text evidence="1 4">Component of the NALCN channel complex (PubMed:33273469). NALCN complex consists of NALCN and auxiliary subunits, UNC79, UNC80 and NACL1. These auxiliary subunits are essential for the NALCN channel function (By similarity).</text>
</comment>
<comment type="subcellular location">
    <subcellularLocation>
        <location evidence="1">Cell membrane</location>
        <topology evidence="2">Multi-pass membrane protein</topology>
    </subcellularLocation>
</comment>
<comment type="alternative products">
    <event type="alternative splicing"/>
    <isoform>
        <id>Q8CCS2-1</id>
        <name>1</name>
        <sequence type="displayed"/>
    </isoform>
    <isoform>
        <id>Q8CCS2-2</id>
        <name>2</name>
        <sequence type="described" ref="VSP_034162 VSP_034163"/>
    </isoform>
</comment>
<comment type="similarity">
    <text evidence="6">Belongs to the NALF family.</text>
</comment>
<reference key="1">
    <citation type="journal article" date="2005" name="Science">
        <title>The transcriptional landscape of the mammalian genome.</title>
        <authorList>
            <person name="Carninci P."/>
            <person name="Kasukawa T."/>
            <person name="Katayama S."/>
            <person name="Gough J."/>
            <person name="Frith M.C."/>
            <person name="Maeda N."/>
            <person name="Oyama R."/>
            <person name="Ravasi T."/>
            <person name="Lenhard B."/>
            <person name="Wells C."/>
            <person name="Kodzius R."/>
            <person name="Shimokawa K."/>
            <person name="Bajic V.B."/>
            <person name="Brenner S.E."/>
            <person name="Batalov S."/>
            <person name="Forrest A.R."/>
            <person name="Zavolan M."/>
            <person name="Davis M.J."/>
            <person name="Wilming L.G."/>
            <person name="Aidinis V."/>
            <person name="Allen J.E."/>
            <person name="Ambesi-Impiombato A."/>
            <person name="Apweiler R."/>
            <person name="Aturaliya R.N."/>
            <person name="Bailey T.L."/>
            <person name="Bansal M."/>
            <person name="Baxter L."/>
            <person name="Beisel K.W."/>
            <person name="Bersano T."/>
            <person name="Bono H."/>
            <person name="Chalk A.M."/>
            <person name="Chiu K.P."/>
            <person name="Choudhary V."/>
            <person name="Christoffels A."/>
            <person name="Clutterbuck D.R."/>
            <person name="Crowe M.L."/>
            <person name="Dalla E."/>
            <person name="Dalrymple B.P."/>
            <person name="de Bono B."/>
            <person name="Della Gatta G."/>
            <person name="di Bernardo D."/>
            <person name="Down T."/>
            <person name="Engstrom P."/>
            <person name="Fagiolini M."/>
            <person name="Faulkner G."/>
            <person name="Fletcher C.F."/>
            <person name="Fukushima T."/>
            <person name="Furuno M."/>
            <person name="Futaki S."/>
            <person name="Gariboldi M."/>
            <person name="Georgii-Hemming P."/>
            <person name="Gingeras T.R."/>
            <person name="Gojobori T."/>
            <person name="Green R.E."/>
            <person name="Gustincich S."/>
            <person name="Harbers M."/>
            <person name="Hayashi Y."/>
            <person name="Hensch T.K."/>
            <person name="Hirokawa N."/>
            <person name="Hill D."/>
            <person name="Huminiecki L."/>
            <person name="Iacono M."/>
            <person name="Ikeo K."/>
            <person name="Iwama A."/>
            <person name="Ishikawa T."/>
            <person name="Jakt M."/>
            <person name="Kanapin A."/>
            <person name="Katoh M."/>
            <person name="Kawasawa Y."/>
            <person name="Kelso J."/>
            <person name="Kitamura H."/>
            <person name="Kitano H."/>
            <person name="Kollias G."/>
            <person name="Krishnan S.P."/>
            <person name="Kruger A."/>
            <person name="Kummerfeld S.K."/>
            <person name="Kurochkin I.V."/>
            <person name="Lareau L.F."/>
            <person name="Lazarevic D."/>
            <person name="Lipovich L."/>
            <person name="Liu J."/>
            <person name="Liuni S."/>
            <person name="McWilliam S."/>
            <person name="Madan Babu M."/>
            <person name="Madera M."/>
            <person name="Marchionni L."/>
            <person name="Matsuda H."/>
            <person name="Matsuzawa S."/>
            <person name="Miki H."/>
            <person name="Mignone F."/>
            <person name="Miyake S."/>
            <person name="Morris K."/>
            <person name="Mottagui-Tabar S."/>
            <person name="Mulder N."/>
            <person name="Nakano N."/>
            <person name="Nakauchi H."/>
            <person name="Ng P."/>
            <person name="Nilsson R."/>
            <person name="Nishiguchi S."/>
            <person name="Nishikawa S."/>
            <person name="Nori F."/>
            <person name="Ohara O."/>
            <person name="Okazaki Y."/>
            <person name="Orlando V."/>
            <person name="Pang K.C."/>
            <person name="Pavan W.J."/>
            <person name="Pavesi G."/>
            <person name="Pesole G."/>
            <person name="Petrovsky N."/>
            <person name="Piazza S."/>
            <person name="Reed J."/>
            <person name="Reid J.F."/>
            <person name="Ring B.Z."/>
            <person name="Ringwald M."/>
            <person name="Rost B."/>
            <person name="Ruan Y."/>
            <person name="Salzberg S.L."/>
            <person name="Sandelin A."/>
            <person name="Schneider C."/>
            <person name="Schoenbach C."/>
            <person name="Sekiguchi K."/>
            <person name="Semple C.A."/>
            <person name="Seno S."/>
            <person name="Sessa L."/>
            <person name="Sheng Y."/>
            <person name="Shibata Y."/>
            <person name="Shimada H."/>
            <person name="Shimada K."/>
            <person name="Silva D."/>
            <person name="Sinclair B."/>
            <person name="Sperling S."/>
            <person name="Stupka E."/>
            <person name="Sugiura K."/>
            <person name="Sultana R."/>
            <person name="Takenaka Y."/>
            <person name="Taki K."/>
            <person name="Tammoja K."/>
            <person name="Tan S.L."/>
            <person name="Tang S."/>
            <person name="Taylor M.S."/>
            <person name="Tegner J."/>
            <person name="Teichmann S.A."/>
            <person name="Ueda H.R."/>
            <person name="van Nimwegen E."/>
            <person name="Verardo R."/>
            <person name="Wei C.L."/>
            <person name="Yagi K."/>
            <person name="Yamanishi H."/>
            <person name="Zabarovsky E."/>
            <person name="Zhu S."/>
            <person name="Zimmer A."/>
            <person name="Hide W."/>
            <person name="Bult C."/>
            <person name="Grimmond S.M."/>
            <person name="Teasdale R.D."/>
            <person name="Liu E.T."/>
            <person name="Brusic V."/>
            <person name="Quackenbush J."/>
            <person name="Wahlestedt C."/>
            <person name="Mattick J.S."/>
            <person name="Hume D.A."/>
            <person name="Kai C."/>
            <person name="Sasaki D."/>
            <person name="Tomaru Y."/>
            <person name="Fukuda S."/>
            <person name="Kanamori-Katayama M."/>
            <person name="Suzuki M."/>
            <person name="Aoki J."/>
            <person name="Arakawa T."/>
            <person name="Iida J."/>
            <person name="Imamura K."/>
            <person name="Itoh M."/>
            <person name="Kato T."/>
            <person name="Kawaji H."/>
            <person name="Kawagashira N."/>
            <person name="Kawashima T."/>
            <person name="Kojima M."/>
            <person name="Kondo S."/>
            <person name="Konno H."/>
            <person name="Nakano K."/>
            <person name="Ninomiya N."/>
            <person name="Nishio T."/>
            <person name="Okada M."/>
            <person name="Plessy C."/>
            <person name="Shibata K."/>
            <person name="Shiraki T."/>
            <person name="Suzuki S."/>
            <person name="Tagami M."/>
            <person name="Waki K."/>
            <person name="Watahiki A."/>
            <person name="Okamura-Oho Y."/>
            <person name="Suzuki H."/>
            <person name="Kawai J."/>
            <person name="Hayashizaki Y."/>
        </authorList>
    </citation>
    <scope>NUCLEOTIDE SEQUENCE [LARGE SCALE MRNA] (ISOFORM 1)</scope>
    <source>
        <strain>C57BL/6J</strain>
        <tissue>Olfactory bulb</tissue>
    </source>
</reference>
<reference key="2">
    <citation type="journal article" date="2004" name="Genome Res.">
        <title>The status, quality, and expansion of the NIH full-length cDNA project: the Mammalian Gene Collection (MGC).</title>
        <authorList>
            <consortium name="The MGC Project Team"/>
        </authorList>
    </citation>
    <scope>NUCLEOTIDE SEQUENCE [LARGE SCALE MRNA] (ISOFORM 2)</scope>
</reference>
<reference evidence="8" key="3">
    <citation type="journal article" date="2020" name="Nat. Commun.">
        <title>Structure of voltage-modulated sodium-selective NALCN-FAM155A channel complex.</title>
        <authorList>
            <person name="Kang Y."/>
            <person name="Wu J.X."/>
            <person name="Chen L."/>
        </authorList>
    </citation>
    <scope>STRUCTURE BY ELECTRON MICROSCOPY (2.65 ANGSTROMS) OF NALF1 IN COMPLEX WITH RAT NALCN</scope>
    <scope>SUBUNIT</scope>
</reference>
<keyword id="KW-0002">3D-structure</keyword>
<keyword id="KW-0025">Alternative splicing</keyword>
<keyword id="KW-1003">Cell membrane</keyword>
<keyword id="KW-1015">Disulfide bond</keyword>
<keyword id="KW-0325">Glycoprotein</keyword>
<keyword id="KW-0472">Membrane</keyword>
<keyword id="KW-1185">Reference proteome</keyword>
<keyword id="KW-0812">Transmembrane</keyword>
<keyword id="KW-1133">Transmembrane helix</keyword>
<sequence length="467" mass="52739">MTRGAWMCRQYDDGLKIWLAAPRENEKPFIDSERAQKWRLSLASLLFFTVLLSDHLWFCAEAKLTRTRDKEHHQQQQQQQQQQQQQQQQQQQQQQRQQQRQRQQQRQRQQEPSWPALLASMGESSPAAQAHRLLSASSSPTLPPSPGGGGGSKGNRGKNNRSRALFLGNSAKPVWRLETCYPQGASSGQCFTVESADAVCARNWSRGAAAGEEQSSRGSRPTPLWNLSDFYLSFCNSYTLWELFSGLSSPSTLNCSLDVVLTEGGEMTTCRQCIEAYQDYDHHAQEKYEEFESVLHKYLQSDEYSVKSCPEDCKIVYKAWLCSQYFEVTQFNCRKTIPCKQYCLEVQTRCPFILPDNDEVIYGGLSSFICTGLYETFLTNDEPECCDIRSEEQTAPRPKGTVDRRDSCPRTSLTVSSATRLCPGRLKLCVLVLILLHTVLTASAAQNSTGLGLGGLPTLEDNSTRED</sequence>
<organism>
    <name type="scientific">Mus musculus</name>
    <name type="common">Mouse</name>
    <dbReference type="NCBI Taxonomy" id="10090"/>
    <lineage>
        <taxon>Eukaryota</taxon>
        <taxon>Metazoa</taxon>
        <taxon>Chordata</taxon>
        <taxon>Craniata</taxon>
        <taxon>Vertebrata</taxon>
        <taxon>Euteleostomi</taxon>
        <taxon>Mammalia</taxon>
        <taxon>Eutheria</taxon>
        <taxon>Euarchontoglires</taxon>
        <taxon>Glires</taxon>
        <taxon>Rodentia</taxon>
        <taxon>Myomorpha</taxon>
        <taxon>Muroidea</taxon>
        <taxon>Muridae</taxon>
        <taxon>Murinae</taxon>
        <taxon>Mus</taxon>
        <taxon>Mus</taxon>
    </lineage>
</organism>
<protein>
    <recommendedName>
        <fullName>NALCN channel auxiliary factor 1</fullName>
    </recommendedName>
    <alternativeName>
        <fullName>Transmembrane protein FAM155A</fullName>
    </alternativeName>
</protein>
<proteinExistence type="evidence at protein level"/>
<accession>Q8CCS2</accession>
<accession>Q149R3</accession>
<feature type="chain" id="PRO_0000339374" description="NALCN channel auxiliary factor 1">
    <location>
        <begin position="1"/>
        <end position="467"/>
    </location>
</feature>
<feature type="transmembrane region" description="Helical" evidence="2">
    <location>
        <begin position="40"/>
        <end position="60"/>
    </location>
</feature>
<feature type="transmembrane region" description="Helical" evidence="2">
    <location>
        <begin position="426"/>
        <end position="446"/>
    </location>
</feature>
<feature type="region of interest" description="Disordered" evidence="3">
    <location>
        <begin position="121"/>
        <end position="161"/>
    </location>
</feature>
<feature type="region of interest" description="Disordered" evidence="3">
    <location>
        <begin position="390"/>
        <end position="409"/>
    </location>
</feature>
<feature type="compositionally biased region" description="Basic and acidic residues" evidence="3">
    <location>
        <begin position="390"/>
        <end position="408"/>
    </location>
</feature>
<feature type="glycosylation site" description="N-linked (GlcNAc...) asparagine" evidence="2">
    <location>
        <position position="160"/>
    </location>
</feature>
<feature type="glycosylation site" description="N-linked (GlcNAc...) asparagine" evidence="2">
    <location>
        <position position="226"/>
    </location>
</feature>
<feature type="glycosylation site" description="N-linked (GlcNAc...) asparagine" evidence="2">
    <location>
        <position position="254"/>
    </location>
</feature>
<feature type="glycosylation site" description="N-linked (GlcNAc...) asparagine" evidence="2">
    <location>
        <position position="462"/>
    </location>
</feature>
<feature type="disulfide bond" evidence="4 8">
    <location>
        <begin position="200"/>
        <end position="270"/>
    </location>
</feature>
<feature type="disulfide bond" evidence="4 8">
    <location>
        <begin position="235"/>
        <end position="322"/>
    </location>
</feature>
<feature type="disulfide bond" evidence="4 8">
    <location>
        <begin position="255"/>
        <end position="270"/>
    </location>
</feature>
<feature type="disulfide bond" evidence="4 8">
    <location>
        <begin position="313"/>
        <end position="350"/>
    </location>
</feature>
<feature type="disulfide bond" evidence="4 8">
    <location>
        <begin position="333"/>
        <end position="386"/>
    </location>
</feature>
<feature type="disulfide bond" evidence="4 8">
    <location>
        <begin position="339"/>
        <end position="385"/>
    </location>
</feature>
<feature type="disulfide bond" evidence="4 8">
    <location>
        <begin position="343"/>
        <end position="370"/>
    </location>
</feature>
<feature type="splice variant" id="VSP_034162" description="In isoform 2." evidence="5">
    <original>LYETFL</original>
    <variation>EGEVYL</variation>
    <location>
        <begin position="373"/>
        <end position="378"/>
    </location>
</feature>
<feature type="splice variant" id="VSP_034163" description="In isoform 2." evidence="5">
    <location>
        <begin position="379"/>
        <end position="467"/>
    </location>
</feature>
<feature type="turn" evidence="9">
    <location>
        <begin position="196"/>
        <end position="199"/>
    </location>
</feature>
<feature type="strand" evidence="9">
    <location>
        <begin position="233"/>
        <end position="235"/>
    </location>
</feature>
<feature type="helix" evidence="9">
    <location>
        <begin position="240"/>
        <end position="244"/>
    </location>
</feature>
<feature type="turn" evidence="10">
    <location>
        <begin position="251"/>
        <end position="254"/>
    </location>
</feature>
<feature type="turn" evidence="9">
    <location>
        <begin position="258"/>
        <end position="260"/>
    </location>
</feature>
<feature type="helix" evidence="9">
    <location>
        <begin position="268"/>
        <end position="296"/>
    </location>
</feature>
<feature type="helix" evidence="9">
    <location>
        <begin position="299"/>
        <end position="302"/>
    </location>
</feature>
<feature type="helix" evidence="9">
    <location>
        <begin position="310"/>
        <end position="325"/>
    </location>
</feature>
<feature type="strand" evidence="9">
    <location>
        <begin position="334"/>
        <end position="336"/>
    </location>
</feature>
<feature type="helix" evidence="9">
    <location>
        <begin position="341"/>
        <end position="349"/>
    </location>
</feature>
<feature type="strand" evidence="9">
    <location>
        <begin position="358"/>
        <end position="360"/>
    </location>
</feature>
<gene>
    <name evidence="7" type="primary">Nalf1</name>
    <name type="synonym">Fam155a</name>
</gene>